<evidence type="ECO:0000255" key="1">
    <source>
        <dbReference type="HAMAP-Rule" id="MF_01276"/>
    </source>
</evidence>
<evidence type="ECO:0000305" key="2"/>
<protein>
    <recommendedName>
        <fullName evidence="1">Putrescine aminotransferase</fullName>
        <shortName evidence="1">PAT</shortName>
        <shortName evidence="1">PATase</shortName>
        <ecNumber evidence="1">2.6.1.82</ecNumber>
    </recommendedName>
    <alternativeName>
        <fullName evidence="1">Cadaverine transaminase</fullName>
    </alternativeName>
    <alternativeName>
        <fullName evidence="1">Diamine transaminase</fullName>
        <ecNumber evidence="1">2.6.1.29</ecNumber>
    </alternativeName>
    <alternativeName>
        <fullName evidence="1">Putrescine transaminase</fullName>
    </alternativeName>
    <alternativeName>
        <fullName evidence="1">Putrescine--2-oxoglutaric acid transaminase</fullName>
    </alternativeName>
</protein>
<comment type="function">
    <text evidence="1">Catalyzes the aminotransferase reaction from putrescine to 2-oxoglutarate, leading to glutamate and 4-aminobutanal, which spontaneously cyclizes to form 1-pyrroline. This is the first step in one of two pathways for putrescine degradation, where putrescine is converted into 4-aminobutanoate (gamma-aminobutyrate or GABA) via 4-aminobutanal. Also functions as a cadaverine transaminase in a a L-lysine degradation pathway to succinate that proceeds via cadaverine, glutarate and L-2-hydroxyglutarate.</text>
</comment>
<comment type="catalytic activity">
    <reaction evidence="1">
        <text>an alkane-alpha,omega-diamine + 2-oxoglutarate = an omega-aminoaldehyde + L-glutamate</text>
        <dbReference type="Rhea" id="RHEA:18217"/>
        <dbReference type="Rhea" id="RHEA-COMP:9766"/>
        <dbReference type="Rhea" id="RHEA-COMP:12750"/>
        <dbReference type="ChEBI" id="CHEBI:16810"/>
        <dbReference type="ChEBI" id="CHEBI:29985"/>
        <dbReference type="ChEBI" id="CHEBI:70977"/>
        <dbReference type="ChEBI" id="CHEBI:133427"/>
        <dbReference type="EC" id="2.6.1.29"/>
    </reaction>
    <physiologicalReaction direction="left-to-right" evidence="1">
        <dbReference type="Rhea" id="RHEA:18218"/>
    </physiologicalReaction>
</comment>
<comment type="catalytic activity">
    <reaction evidence="1">
        <text>putrescine + 2-oxoglutarate = 1-pyrroline + L-glutamate + H2O</text>
        <dbReference type="Rhea" id="RHEA:12268"/>
        <dbReference type="ChEBI" id="CHEBI:15377"/>
        <dbReference type="ChEBI" id="CHEBI:16810"/>
        <dbReference type="ChEBI" id="CHEBI:29985"/>
        <dbReference type="ChEBI" id="CHEBI:36781"/>
        <dbReference type="ChEBI" id="CHEBI:326268"/>
        <dbReference type="EC" id="2.6.1.82"/>
    </reaction>
    <physiologicalReaction direction="left-to-right" evidence="1">
        <dbReference type="Rhea" id="RHEA:12269"/>
    </physiologicalReaction>
</comment>
<comment type="catalytic activity">
    <reaction evidence="1">
        <text>cadaverine + 2-oxoglutarate = 5-aminopentanal + L-glutamate</text>
        <dbReference type="Rhea" id="RHEA:61624"/>
        <dbReference type="ChEBI" id="CHEBI:16810"/>
        <dbReference type="ChEBI" id="CHEBI:29985"/>
        <dbReference type="ChEBI" id="CHEBI:58384"/>
        <dbReference type="ChEBI" id="CHEBI:144896"/>
    </reaction>
    <physiologicalReaction direction="left-to-right" evidence="1">
        <dbReference type="Rhea" id="RHEA:61625"/>
    </physiologicalReaction>
</comment>
<comment type="cofactor">
    <cofactor evidence="1">
        <name>pyridoxal 5'-phosphate</name>
        <dbReference type="ChEBI" id="CHEBI:597326"/>
    </cofactor>
</comment>
<comment type="pathway">
    <text evidence="1">Amine and polyamine degradation; putrescine degradation; 4-aminobutanal from putrescine (transaminase route): step 1/1.</text>
</comment>
<comment type="similarity">
    <text evidence="1">Belongs to the class-III pyridoxal-phosphate-dependent aminotransferase family. Putrescine aminotransferase subfamily.</text>
</comment>
<comment type="sequence caution" evidence="2">
    <conflict type="erroneous initiation">
        <sequence resource="EMBL-CDS" id="ABG71145"/>
    </conflict>
</comment>
<name>PAT_ECOL5</name>
<reference key="1">
    <citation type="journal article" date="2006" name="Mol. Microbiol.">
        <title>Role of pathogenicity island-associated integrases in the genome plasticity of uropathogenic Escherichia coli strain 536.</title>
        <authorList>
            <person name="Hochhut B."/>
            <person name="Wilde C."/>
            <person name="Balling G."/>
            <person name="Middendorf B."/>
            <person name="Dobrindt U."/>
            <person name="Brzuszkiewicz E."/>
            <person name="Gottschalk G."/>
            <person name="Carniel E."/>
            <person name="Hacker J."/>
        </authorList>
    </citation>
    <scope>NUCLEOTIDE SEQUENCE [LARGE SCALE GENOMIC DNA]</scope>
    <source>
        <strain>536 / UPEC</strain>
    </source>
</reference>
<dbReference type="EC" id="2.6.1.82" evidence="1"/>
<dbReference type="EC" id="2.6.1.29" evidence="1"/>
<dbReference type="EMBL" id="CP000247">
    <property type="protein sequence ID" value="ABG71145.1"/>
    <property type="status" value="ALT_INIT"/>
    <property type="molecule type" value="Genomic_DNA"/>
</dbReference>
<dbReference type="RefSeq" id="WP_041032046.1">
    <property type="nucleotide sequence ID" value="NC_008253.1"/>
</dbReference>
<dbReference type="SMR" id="Q0TD34"/>
<dbReference type="KEGG" id="ecp:ECP_3163"/>
<dbReference type="HOGENOM" id="CLU_016922_10_0_6"/>
<dbReference type="UniPathway" id="UPA00188">
    <property type="reaction ID" value="UER00290"/>
</dbReference>
<dbReference type="Proteomes" id="UP000009182">
    <property type="component" value="Chromosome"/>
</dbReference>
<dbReference type="GO" id="GO:0019161">
    <property type="term" value="F:diamine transaminase activity"/>
    <property type="evidence" value="ECO:0007669"/>
    <property type="project" value="UniProtKB-EC"/>
</dbReference>
<dbReference type="GO" id="GO:0042802">
    <property type="term" value="F:identical protein binding"/>
    <property type="evidence" value="ECO:0007669"/>
    <property type="project" value="TreeGrafter"/>
</dbReference>
<dbReference type="GO" id="GO:0033094">
    <property type="term" value="F:putrescine--2-oxoglutarate transaminase activity"/>
    <property type="evidence" value="ECO:0007669"/>
    <property type="project" value="UniProtKB-UniRule"/>
</dbReference>
<dbReference type="GO" id="GO:0030170">
    <property type="term" value="F:pyridoxal phosphate binding"/>
    <property type="evidence" value="ECO:0007669"/>
    <property type="project" value="UniProtKB-UniRule"/>
</dbReference>
<dbReference type="GO" id="GO:0019477">
    <property type="term" value="P:L-lysine catabolic process"/>
    <property type="evidence" value="ECO:0007669"/>
    <property type="project" value="UniProtKB-UniRule"/>
</dbReference>
<dbReference type="GO" id="GO:0009447">
    <property type="term" value="P:putrescine catabolic process"/>
    <property type="evidence" value="ECO:0007669"/>
    <property type="project" value="UniProtKB-UniRule"/>
</dbReference>
<dbReference type="CDD" id="cd00610">
    <property type="entry name" value="OAT_like"/>
    <property type="match status" value="1"/>
</dbReference>
<dbReference type="FunFam" id="3.40.640.10:FF:000004">
    <property type="entry name" value="Acetylornithine aminotransferase"/>
    <property type="match status" value="1"/>
</dbReference>
<dbReference type="Gene3D" id="3.90.1150.10">
    <property type="entry name" value="Aspartate Aminotransferase, domain 1"/>
    <property type="match status" value="1"/>
</dbReference>
<dbReference type="Gene3D" id="3.40.640.10">
    <property type="entry name" value="Type I PLP-dependent aspartate aminotransferase-like (Major domain)"/>
    <property type="match status" value="1"/>
</dbReference>
<dbReference type="HAMAP" id="MF_01276">
    <property type="entry name" value="Putres_aminotrans_3"/>
    <property type="match status" value="1"/>
</dbReference>
<dbReference type="InterPro" id="IPR005814">
    <property type="entry name" value="Aminotrans_3"/>
</dbReference>
<dbReference type="InterPro" id="IPR049704">
    <property type="entry name" value="Aminotrans_3_PPA_site"/>
</dbReference>
<dbReference type="InterPro" id="IPR050103">
    <property type="entry name" value="Class-III_PLP-dep_AT"/>
</dbReference>
<dbReference type="InterPro" id="IPR017747">
    <property type="entry name" value="Putrescine_aminotransferase"/>
</dbReference>
<dbReference type="InterPro" id="IPR015424">
    <property type="entry name" value="PyrdxlP-dep_Trfase"/>
</dbReference>
<dbReference type="InterPro" id="IPR015421">
    <property type="entry name" value="PyrdxlP-dep_Trfase_major"/>
</dbReference>
<dbReference type="InterPro" id="IPR015422">
    <property type="entry name" value="PyrdxlP-dep_Trfase_small"/>
</dbReference>
<dbReference type="NCBIfam" id="NF008570">
    <property type="entry name" value="PRK11522.1"/>
    <property type="match status" value="1"/>
</dbReference>
<dbReference type="NCBIfam" id="TIGR03372">
    <property type="entry name" value="putres_am_tran"/>
    <property type="match status" value="1"/>
</dbReference>
<dbReference type="PANTHER" id="PTHR11986">
    <property type="entry name" value="AMINOTRANSFERASE CLASS III"/>
    <property type="match status" value="1"/>
</dbReference>
<dbReference type="PANTHER" id="PTHR11986:SF112">
    <property type="entry name" value="PUTRESCINE AMINOTRANSFERASE"/>
    <property type="match status" value="1"/>
</dbReference>
<dbReference type="Pfam" id="PF00202">
    <property type="entry name" value="Aminotran_3"/>
    <property type="match status" value="1"/>
</dbReference>
<dbReference type="PIRSF" id="PIRSF000521">
    <property type="entry name" value="Transaminase_4ab_Lys_Orn"/>
    <property type="match status" value="1"/>
</dbReference>
<dbReference type="SUPFAM" id="SSF53383">
    <property type="entry name" value="PLP-dependent transferases"/>
    <property type="match status" value="1"/>
</dbReference>
<dbReference type="PROSITE" id="PS00600">
    <property type="entry name" value="AA_TRANSFER_CLASS_3"/>
    <property type="match status" value="1"/>
</dbReference>
<gene>
    <name evidence="1" type="primary">patA</name>
    <name type="ordered locus">ECP_3163</name>
</gene>
<sequence length="459" mass="49679">MNRLPSSASALAYSAHALNLIEKRTLDHEEMKALNREVIEYFKEHVNPGFLEYRKSVTAGGDYGAVEWQAGGLNTLVDTQGQEFIDCLGGFGIFNVGHRNPVVVSAVQNQLAKQPLHSQELLDPLRAMLAKTLAALTPGKLKYSFFCNSGTESVEAALKLAKAYQSPRGKFTFIATSGAFHGKSLGALSATAKSTFRKPFMPLLPGFRHVPFGNIEAMRTALSECKKTGDDVAAVILEPIQGEGGVILPPPGYLTAVRKLCDEFGALMILDEVQTGMGRTGKMFACEHENVQPDILCLAKALGGGVMPIGATIATEEVFSVLFDNPFLHTTTFGGNPLACAAALATINVLLEQNLPAQAEQKGDMLLDGFRQLAREYPDLVQEARGKGMLMAIEFVDNEIGYNFASEMFRQRVLVAGTLNNAKTIRIEPPLTLTIEQCEQVIKAARKALAAMRVSVEEA</sequence>
<feature type="chain" id="PRO_0000269729" description="Putrescine aminotransferase">
    <location>
        <begin position="1"/>
        <end position="459"/>
    </location>
</feature>
<feature type="binding site" description="in other chain" evidence="1">
    <location>
        <begin position="150"/>
        <end position="151"/>
    </location>
    <ligand>
        <name>pyridoxal 5'-phosphate</name>
        <dbReference type="ChEBI" id="CHEBI:597326"/>
        <note>ligand shared between dimeric partners</note>
    </ligand>
</feature>
<feature type="binding site" description="in other chain" evidence="1">
    <location>
        <position position="274"/>
    </location>
    <ligand>
        <name>pyridoxal 5'-phosphate</name>
        <dbReference type="ChEBI" id="CHEBI:597326"/>
        <note>ligand shared between dimeric partners</note>
    </ligand>
</feature>
<feature type="binding site" evidence="1">
    <location>
        <position position="332"/>
    </location>
    <ligand>
        <name>pyridoxal 5'-phosphate</name>
        <dbReference type="ChEBI" id="CHEBI:597326"/>
        <note>ligand shared between dimeric partners</note>
    </ligand>
</feature>
<feature type="modified residue" description="N6-(pyridoxal phosphate)lysine" evidence="1">
    <location>
        <position position="300"/>
    </location>
</feature>
<accession>Q0TD34</accession>
<proteinExistence type="inferred from homology"/>
<keyword id="KW-0032">Aminotransferase</keyword>
<keyword id="KW-0663">Pyridoxal phosphate</keyword>
<keyword id="KW-0808">Transferase</keyword>
<organism>
    <name type="scientific">Escherichia coli O6:K15:H31 (strain 536 / UPEC)</name>
    <dbReference type="NCBI Taxonomy" id="362663"/>
    <lineage>
        <taxon>Bacteria</taxon>
        <taxon>Pseudomonadati</taxon>
        <taxon>Pseudomonadota</taxon>
        <taxon>Gammaproteobacteria</taxon>
        <taxon>Enterobacterales</taxon>
        <taxon>Enterobacteriaceae</taxon>
        <taxon>Escherichia</taxon>
    </lineage>
</organism>